<comment type="similarity">
    <text evidence="1">Belongs to the PPR family. PCMP-H subfamily.</text>
</comment>
<comment type="online information" name="Pentatricopeptide repeat proteins">
    <link uri="https://ppr.plantenergy.uwa.edu.au"/>
</comment>
<dbReference type="EMBL" id="AL132965">
    <property type="protein sequence ID" value="CAB66909.1"/>
    <property type="molecule type" value="Genomic_DNA"/>
</dbReference>
<dbReference type="EMBL" id="CP002686">
    <property type="protein sequence ID" value="AEE78579.1"/>
    <property type="molecule type" value="Genomic_DNA"/>
</dbReference>
<dbReference type="PIR" id="T46037">
    <property type="entry name" value="T46037"/>
</dbReference>
<dbReference type="RefSeq" id="NP_190540.1">
    <property type="nucleotide sequence ID" value="NM_114831.1"/>
</dbReference>
<dbReference type="SMR" id="Q9M2Y7"/>
<dbReference type="FunCoup" id="Q9M2Y7">
    <property type="interactions" value="22"/>
</dbReference>
<dbReference type="STRING" id="3702.Q9M2Y7"/>
<dbReference type="PaxDb" id="3702-AT3G49710.1"/>
<dbReference type="ProteomicsDB" id="248957"/>
<dbReference type="EnsemblPlants" id="AT3G49710.1">
    <property type="protein sequence ID" value="AT3G49710.1"/>
    <property type="gene ID" value="AT3G49710"/>
</dbReference>
<dbReference type="GeneID" id="824133"/>
<dbReference type="Gramene" id="AT3G49710.1">
    <property type="protein sequence ID" value="AT3G49710.1"/>
    <property type="gene ID" value="AT3G49710"/>
</dbReference>
<dbReference type="KEGG" id="ath:AT3G49710"/>
<dbReference type="Araport" id="AT3G49710"/>
<dbReference type="TAIR" id="AT3G49710"/>
<dbReference type="eggNOG" id="KOG4197">
    <property type="taxonomic scope" value="Eukaryota"/>
</dbReference>
<dbReference type="HOGENOM" id="CLU_002706_37_8_1"/>
<dbReference type="InParanoid" id="Q9M2Y7"/>
<dbReference type="OMA" id="CPDDCSF"/>
<dbReference type="PhylomeDB" id="Q9M2Y7"/>
<dbReference type="PRO" id="PR:Q9M2Y7"/>
<dbReference type="Proteomes" id="UP000006548">
    <property type="component" value="Chromosome 3"/>
</dbReference>
<dbReference type="ExpressionAtlas" id="Q9M2Y7">
    <property type="expression patterns" value="baseline and differential"/>
</dbReference>
<dbReference type="GO" id="GO:0003723">
    <property type="term" value="F:RNA binding"/>
    <property type="evidence" value="ECO:0007669"/>
    <property type="project" value="InterPro"/>
</dbReference>
<dbReference type="GO" id="GO:0008270">
    <property type="term" value="F:zinc ion binding"/>
    <property type="evidence" value="ECO:0007669"/>
    <property type="project" value="InterPro"/>
</dbReference>
<dbReference type="GO" id="GO:0009451">
    <property type="term" value="P:RNA modification"/>
    <property type="evidence" value="ECO:0007669"/>
    <property type="project" value="InterPro"/>
</dbReference>
<dbReference type="FunFam" id="1.25.40.10:FF:000351">
    <property type="entry name" value="Pentatricopeptide repeat-containing protein"/>
    <property type="match status" value="1"/>
</dbReference>
<dbReference type="FunFam" id="1.25.40.10:FF:001715">
    <property type="entry name" value="Pentatricopeptide repeat-containing protein"/>
    <property type="match status" value="1"/>
</dbReference>
<dbReference type="FunFam" id="1.25.40.10:FF:000442">
    <property type="entry name" value="Pentatricopeptide repeat-containing protein At3g49710"/>
    <property type="match status" value="1"/>
</dbReference>
<dbReference type="FunFam" id="1.25.40.10:FF:001496">
    <property type="entry name" value="Pentatricopeptide repeat-containing protein At3g49710"/>
    <property type="match status" value="1"/>
</dbReference>
<dbReference type="FunFam" id="1.25.40.10:FF:000073">
    <property type="entry name" value="Pentatricopeptide repeat-containing protein chloroplastic"/>
    <property type="match status" value="1"/>
</dbReference>
<dbReference type="Gene3D" id="1.25.40.10">
    <property type="entry name" value="Tetratricopeptide repeat domain"/>
    <property type="match status" value="5"/>
</dbReference>
<dbReference type="InterPro" id="IPR032867">
    <property type="entry name" value="DYW_dom"/>
</dbReference>
<dbReference type="InterPro" id="IPR046848">
    <property type="entry name" value="E_motif"/>
</dbReference>
<dbReference type="InterPro" id="IPR046849">
    <property type="entry name" value="Eplus_motif"/>
</dbReference>
<dbReference type="InterPro" id="IPR002885">
    <property type="entry name" value="Pentatricopeptide_rpt"/>
</dbReference>
<dbReference type="InterPro" id="IPR046960">
    <property type="entry name" value="PPR_At4g14850-like_plant"/>
</dbReference>
<dbReference type="InterPro" id="IPR011990">
    <property type="entry name" value="TPR-like_helical_dom_sf"/>
</dbReference>
<dbReference type="NCBIfam" id="TIGR00756">
    <property type="entry name" value="PPR"/>
    <property type="match status" value="5"/>
</dbReference>
<dbReference type="PANTHER" id="PTHR47926:SF505">
    <property type="entry name" value="PENTATRICOPEPTIDE REPEAT (PPR) SUPERFAMILY PROTEIN"/>
    <property type="match status" value="1"/>
</dbReference>
<dbReference type="PANTHER" id="PTHR47926">
    <property type="entry name" value="PENTATRICOPEPTIDE REPEAT-CONTAINING PROTEIN"/>
    <property type="match status" value="1"/>
</dbReference>
<dbReference type="Pfam" id="PF14432">
    <property type="entry name" value="DYW_deaminase"/>
    <property type="match status" value="1"/>
</dbReference>
<dbReference type="Pfam" id="PF20431">
    <property type="entry name" value="E_motif"/>
    <property type="match status" value="1"/>
</dbReference>
<dbReference type="Pfam" id="PF20430">
    <property type="entry name" value="Eplus_motif"/>
    <property type="match status" value="1"/>
</dbReference>
<dbReference type="Pfam" id="PF01535">
    <property type="entry name" value="PPR"/>
    <property type="match status" value="4"/>
</dbReference>
<dbReference type="Pfam" id="PF13041">
    <property type="entry name" value="PPR_2"/>
    <property type="match status" value="4"/>
</dbReference>
<dbReference type="SUPFAM" id="SSF48452">
    <property type="entry name" value="TPR-like"/>
    <property type="match status" value="1"/>
</dbReference>
<dbReference type="PROSITE" id="PS51375">
    <property type="entry name" value="PPR"/>
    <property type="match status" value="12"/>
</dbReference>
<name>PP274_ARATH</name>
<accession>Q9M2Y7</accession>
<reference key="1">
    <citation type="journal article" date="2000" name="Nature">
        <title>Sequence and analysis of chromosome 3 of the plant Arabidopsis thaliana.</title>
        <authorList>
            <person name="Salanoubat M."/>
            <person name="Lemcke K."/>
            <person name="Rieger M."/>
            <person name="Ansorge W."/>
            <person name="Unseld M."/>
            <person name="Fartmann B."/>
            <person name="Valle G."/>
            <person name="Bloecker H."/>
            <person name="Perez-Alonso M."/>
            <person name="Obermaier B."/>
            <person name="Delseny M."/>
            <person name="Boutry M."/>
            <person name="Grivell L.A."/>
            <person name="Mache R."/>
            <person name="Puigdomenech P."/>
            <person name="De Simone V."/>
            <person name="Choisne N."/>
            <person name="Artiguenave F."/>
            <person name="Robert C."/>
            <person name="Brottier P."/>
            <person name="Wincker P."/>
            <person name="Cattolico L."/>
            <person name="Weissenbach J."/>
            <person name="Saurin W."/>
            <person name="Quetier F."/>
            <person name="Schaefer M."/>
            <person name="Mueller-Auer S."/>
            <person name="Gabel C."/>
            <person name="Fuchs M."/>
            <person name="Benes V."/>
            <person name="Wurmbach E."/>
            <person name="Drzonek H."/>
            <person name="Erfle H."/>
            <person name="Jordan N."/>
            <person name="Bangert S."/>
            <person name="Wiedelmann R."/>
            <person name="Kranz H."/>
            <person name="Voss H."/>
            <person name="Holland R."/>
            <person name="Brandt P."/>
            <person name="Nyakatura G."/>
            <person name="Vezzi A."/>
            <person name="D'Angelo M."/>
            <person name="Pallavicini A."/>
            <person name="Toppo S."/>
            <person name="Simionati B."/>
            <person name="Conrad A."/>
            <person name="Hornischer K."/>
            <person name="Kauer G."/>
            <person name="Loehnert T.-H."/>
            <person name="Nordsiek G."/>
            <person name="Reichelt J."/>
            <person name="Scharfe M."/>
            <person name="Schoen O."/>
            <person name="Bargues M."/>
            <person name="Terol J."/>
            <person name="Climent J."/>
            <person name="Navarro P."/>
            <person name="Collado C."/>
            <person name="Perez-Perez A."/>
            <person name="Ottenwaelder B."/>
            <person name="Duchemin D."/>
            <person name="Cooke R."/>
            <person name="Laudie M."/>
            <person name="Berger-Llauro C."/>
            <person name="Purnelle B."/>
            <person name="Masuy D."/>
            <person name="de Haan M."/>
            <person name="Maarse A.C."/>
            <person name="Alcaraz J.-P."/>
            <person name="Cottet A."/>
            <person name="Casacuberta E."/>
            <person name="Monfort A."/>
            <person name="Argiriou A."/>
            <person name="Flores M."/>
            <person name="Liguori R."/>
            <person name="Vitale D."/>
            <person name="Mannhaupt G."/>
            <person name="Haase D."/>
            <person name="Schoof H."/>
            <person name="Rudd S."/>
            <person name="Zaccaria P."/>
            <person name="Mewes H.-W."/>
            <person name="Mayer K.F.X."/>
            <person name="Kaul S."/>
            <person name="Town C.D."/>
            <person name="Koo H.L."/>
            <person name="Tallon L.J."/>
            <person name="Jenkins J."/>
            <person name="Rooney T."/>
            <person name="Rizzo M."/>
            <person name="Walts A."/>
            <person name="Utterback T."/>
            <person name="Fujii C.Y."/>
            <person name="Shea T.P."/>
            <person name="Creasy T.H."/>
            <person name="Haas B."/>
            <person name="Maiti R."/>
            <person name="Wu D."/>
            <person name="Peterson J."/>
            <person name="Van Aken S."/>
            <person name="Pai G."/>
            <person name="Militscher J."/>
            <person name="Sellers P."/>
            <person name="Gill J.E."/>
            <person name="Feldblyum T.V."/>
            <person name="Preuss D."/>
            <person name="Lin X."/>
            <person name="Nierman W.C."/>
            <person name="Salzberg S.L."/>
            <person name="White O."/>
            <person name="Venter J.C."/>
            <person name="Fraser C.M."/>
            <person name="Kaneko T."/>
            <person name="Nakamura Y."/>
            <person name="Sato S."/>
            <person name="Kato T."/>
            <person name="Asamizu E."/>
            <person name="Sasamoto S."/>
            <person name="Kimura T."/>
            <person name="Idesawa K."/>
            <person name="Kawashima K."/>
            <person name="Kishida Y."/>
            <person name="Kiyokawa C."/>
            <person name="Kohara M."/>
            <person name="Matsumoto M."/>
            <person name="Matsuno A."/>
            <person name="Muraki A."/>
            <person name="Nakayama S."/>
            <person name="Nakazaki N."/>
            <person name="Shinpo S."/>
            <person name="Takeuchi C."/>
            <person name="Wada T."/>
            <person name="Watanabe A."/>
            <person name="Yamada M."/>
            <person name="Yasuda M."/>
            <person name="Tabata S."/>
        </authorList>
    </citation>
    <scope>NUCLEOTIDE SEQUENCE [LARGE SCALE GENOMIC DNA]</scope>
    <source>
        <strain>cv. Columbia</strain>
    </source>
</reference>
<reference key="2">
    <citation type="journal article" date="2017" name="Plant J.">
        <title>Araport11: a complete reannotation of the Arabidopsis thaliana reference genome.</title>
        <authorList>
            <person name="Cheng C.Y."/>
            <person name="Krishnakumar V."/>
            <person name="Chan A.P."/>
            <person name="Thibaud-Nissen F."/>
            <person name="Schobel S."/>
            <person name="Town C.D."/>
        </authorList>
    </citation>
    <scope>GENOME REANNOTATION</scope>
    <source>
        <strain>cv. Columbia</strain>
    </source>
</reference>
<reference key="3">
    <citation type="journal article" date="2004" name="Plant Cell">
        <title>Genome-wide analysis of Arabidopsis pentatricopeptide repeat proteins reveals their essential role in organelle biogenesis.</title>
        <authorList>
            <person name="Lurin C."/>
            <person name="Andres C."/>
            <person name="Aubourg S."/>
            <person name="Bellaoui M."/>
            <person name="Bitton F."/>
            <person name="Bruyere C."/>
            <person name="Caboche M."/>
            <person name="Debast C."/>
            <person name="Gualberto J."/>
            <person name="Hoffmann B."/>
            <person name="Lecharny A."/>
            <person name="Le Ret M."/>
            <person name="Martin-Magniette M.-L."/>
            <person name="Mireau H."/>
            <person name="Peeters N."/>
            <person name="Renou J.-P."/>
            <person name="Szurek B."/>
            <person name="Taconnat L."/>
            <person name="Small I."/>
        </authorList>
    </citation>
    <scope>GENE FAMILY</scope>
</reference>
<gene>
    <name type="primary">PCMP-H79</name>
    <name type="ordered locus">At3g49710</name>
    <name type="ORF">T16K5.60</name>
</gene>
<evidence type="ECO:0000305" key="1"/>
<keyword id="KW-1185">Reference proteome</keyword>
<keyword id="KW-0677">Repeat</keyword>
<proteinExistence type="evidence at transcript level"/>
<protein>
    <recommendedName>
        <fullName>Pentatricopeptide repeat-containing protein At3g49710</fullName>
    </recommendedName>
</protein>
<sequence>MNQTPWKFKTFRDLLLKSVAERDLFTGKSLHALYVKSIVASSTYLSNHFVNLYSKCGRLSYARAAFYSTEEPNVFSYNVIVKAYAKDSKIHIARQLFDEIPQPDTVSYNTLISGYADARETFAAMVLFKRMRKLGFEVDGFTLSGLIAACCDRVDLIKQLHCFSVSGGFDSYSSVNNAFVTYYSKGGLLREAVSVFYGMDELRDEVSWNSMIVAYGQHKEGAKALALYKEMIFKGFKIDMFTLASVLNALTSLDHLIGGRQFHGKLIKAGFHQNSHVGSGLIDFYSKCGGCDGMYDSEKVFQEILSPDLVVWNTMISGYSMNEELSEEAVKSFRQMQRIGHRPDDCSFVCVTSACSNLSSPSQCKQIHGLAIKSHIPSNRISVNNALISLYYKSGNLQDARWVFDRMPELNAVSFNCMIKGYAQHGHGTEALLLYQRMLDSGIAPNKITFVAVLSACAHCGKVDEGQEYFNTMKETFKIEPEAEHYSCMIDLLGRAGKLEEAERFIDAMPYKPGSVAWAALLGACRKHKNMALAERAANELMVMQPLAATPYVMLANMYADARKWEEMASVRKSMRGKRIRKKPGCSWIEVKKKKHVFVAEDWSHPMIREVNEYLEEMMKKMKKVGYVMDKKWAMVKEDEAGEGDEEMRLGHHSEKLAVAFGLMSTRDGEELVVVKNLRICGDCHNAIKFMSAVAGREIIVRDNLRFHCFKDGKCSCGDYW</sequence>
<organism>
    <name type="scientific">Arabidopsis thaliana</name>
    <name type="common">Mouse-ear cress</name>
    <dbReference type="NCBI Taxonomy" id="3702"/>
    <lineage>
        <taxon>Eukaryota</taxon>
        <taxon>Viridiplantae</taxon>
        <taxon>Streptophyta</taxon>
        <taxon>Embryophyta</taxon>
        <taxon>Tracheophyta</taxon>
        <taxon>Spermatophyta</taxon>
        <taxon>Magnoliopsida</taxon>
        <taxon>eudicotyledons</taxon>
        <taxon>Gunneridae</taxon>
        <taxon>Pentapetalae</taxon>
        <taxon>rosids</taxon>
        <taxon>malvids</taxon>
        <taxon>Brassicales</taxon>
        <taxon>Brassicaceae</taxon>
        <taxon>Camelineae</taxon>
        <taxon>Arabidopsis</taxon>
    </lineage>
</organism>
<feature type="chain" id="PRO_0000356133" description="Pentatricopeptide repeat-containing protein At3g49710">
    <location>
        <begin position="1"/>
        <end position="721"/>
    </location>
</feature>
<feature type="repeat" description="PPR 1">
    <location>
        <begin position="42"/>
        <end position="72"/>
    </location>
</feature>
<feature type="repeat" description="PPR 2">
    <location>
        <begin position="73"/>
        <end position="103"/>
    </location>
</feature>
<feature type="repeat" description="PPR 3">
    <location>
        <begin position="104"/>
        <end position="138"/>
    </location>
</feature>
<feature type="repeat" description="PPR 4">
    <location>
        <begin position="139"/>
        <end position="169"/>
    </location>
</feature>
<feature type="repeat" description="PPR 5">
    <location>
        <begin position="172"/>
        <end position="202"/>
    </location>
</feature>
<feature type="repeat" description="PPR 6">
    <location>
        <begin position="204"/>
        <end position="238"/>
    </location>
</feature>
<feature type="repeat" description="PPR 7">
    <location>
        <begin position="239"/>
        <end position="273"/>
    </location>
</feature>
<feature type="repeat" description="PPR 8">
    <location>
        <begin position="274"/>
        <end position="307"/>
    </location>
</feature>
<feature type="repeat" description="PPR 9">
    <location>
        <begin position="308"/>
        <end position="343"/>
    </location>
</feature>
<feature type="repeat" description="PPR 10">
    <location>
        <begin position="344"/>
        <end position="378"/>
    </location>
</feature>
<feature type="repeat" description="PPR 11">
    <location>
        <begin position="380"/>
        <end position="410"/>
    </location>
</feature>
<feature type="repeat" description="PPR 12">
    <location>
        <begin position="411"/>
        <end position="445"/>
    </location>
</feature>
<feature type="repeat" description="PPR 13">
    <location>
        <begin position="446"/>
        <end position="476"/>
    </location>
</feature>
<feature type="repeat" description="PPR 14">
    <location>
        <begin position="482"/>
        <end position="512"/>
    </location>
</feature>
<feature type="region of interest" description="Type E motif">
    <location>
        <begin position="517"/>
        <end position="592"/>
    </location>
</feature>
<feature type="region of interest" description="Type E(+) motif">
    <location>
        <begin position="593"/>
        <end position="623"/>
    </location>
</feature>
<feature type="region of interest" description="Type DYW motif">
    <location>
        <begin position="624"/>
        <end position="721"/>
    </location>
</feature>